<protein>
    <recommendedName>
        <fullName evidence="1">Regulatory protein ViaA</fullName>
    </recommendedName>
    <alternativeName>
        <fullName evidence="1">VWA interacting with AAA+ ATPase</fullName>
    </alternativeName>
</protein>
<keyword id="KW-0143">Chaperone</keyword>
<keyword id="KW-0963">Cytoplasm</keyword>
<organism>
    <name type="scientific">Salmonella schwarzengrund (strain CVM19633)</name>
    <dbReference type="NCBI Taxonomy" id="439843"/>
    <lineage>
        <taxon>Bacteria</taxon>
        <taxon>Pseudomonadati</taxon>
        <taxon>Pseudomonadota</taxon>
        <taxon>Gammaproteobacteria</taxon>
        <taxon>Enterobacterales</taxon>
        <taxon>Enterobacteriaceae</taxon>
        <taxon>Salmonella</taxon>
    </lineage>
</organism>
<name>VIAA_SALSV</name>
<evidence type="ECO:0000255" key="1">
    <source>
        <dbReference type="HAMAP-Rule" id="MF_01626"/>
    </source>
</evidence>
<gene>
    <name evidence="1" type="primary">viaA</name>
    <name type="ordered locus">SeSA_A4090</name>
</gene>
<feature type="chain" id="PRO_1000186161" description="Regulatory protein ViaA">
    <location>
        <begin position="1"/>
        <end position="483"/>
    </location>
</feature>
<accession>B4TN46</accession>
<sequence length="483" mass="55472">MLTLDTLNTMLAVSEEGMVEEMILALLASPQLVIFFEKFPRLKNAVTADLPRWREALRSRLKDAHVPPELMEEVMCYQQSQLLSTPQFIVQLPQILALLHRLHSPYAAQAKQLTESNSTFTPALHTLFLQRWRLSLVVQATTLNQQLLEEEREQLLSDVQERMTLSGQLEPTLAENDNAAGRLWDMSAGQLKRGDYQLIVKYGEFLAAQPELMQLAEQLGRSREAKSVPKKDAPMETFRTLVREPATVPEQVDGIQQSDDILRLLPPELATLGITELEYEFYRRLVEKQLLTYRLHGEAWREKVTERPVVHQDVDEQPRGPFIVCVDTSGSMGGFNEQCAKAFCLALMRVALADNRRCFIMLFSTDVVRYELSGPEGIEQAIRFLSQRFRGGTDIASCFRAIIERMQGREWFDADAVVISDFIAQRLPDDVVSKVGELQRLHQHRFHAVAMSAHGKPGIMRIFDHIWRFDTGMRSRLLRRWRR</sequence>
<comment type="function">
    <text evidence="1">Component of the RavA-ViaA chaperone complex, which may act on the membrane to optimize the function of some of the respiratory chains. ViaA stimulates the ATPase activity of RavA.</text>
</comment>
<comment type="subunit">
    <text evidence="1">Homodimer. Interacts with RavA.</text>
</comment>
<comment type="subcellular location">
    <subcellularLocation>
        <location evidence="1">Cytoplasm</location>
    </subcellularLocation>
</comment>
<comment type="similarity">
    <text evidence="1">Belongs to the ViaA family.</text>
</comment>
<reference key="1">
    <citation type="journal article" date="2011" name="J. Bacteriol.">
        <title>Comparative genomics of 28 Salmonella enterica isolates: evidence for CRISPR-mediated adaptive sublineage evolution.</title>
        <authorList>
            <person name="Fricke W.F."/>
            <person name="Mammel M.K."/>
            <person name="McDermott P.F."/>
            <person name="Tartera C."/>
            <person name="White D.G."/>
            <person name="Leclerc J.E."/>
            <person name="Ravel J."/>
            <person name="Cebula T.A."/>
        </authorList>
    </citation>
    <scope>NUCLEOTIDE SEQUENCE [LARGE SCALE GENOMIC DNA]</scope>
    <source>
        <strain>CVM19633</strain>
    </source>
</reference>
<proteinExistence type="inferred from homology"/>
<dbReference type="EMBL" id="CP001127">
    <property type="protein sequence ID" value="ACF92736.1"/>
    <property type="molecule type" value="Genomic_DNA"/>
</dbReference>
<dbReference type="RefSeq" id="WP_000956581.1">
    <property type="nucleotide sequence ID" value="NC_011094.1"/>
</dbReference>
<dbReference type="SMR" id="B4TN46"/>
<dbReference type="KEGG" id="sew:SeSA_A4090"/>
<dbReference type="HOGENOM" id="CLU_022130_0_0_6"/>
<dbReference type="Proteomes" id="UP000001865">
    <property type="component" value="Chromosome"/>
</dbReference>
<dbReference type="GO" id="GO:0005829">
    <property type="term" value="C:cytosol"/>
    <property type="evidence" value="ECO:0007669"/>
    <property type="project" value="TreeGrafter"/>
</dbReference>
<dbReference type="CDD" id="cd01462">
    <property type="entry name" value="VWA_YIEM_type"/>
    <property type="match status" value="1"/>
</dbReference>
<dbReference type="Gene3D" id="3.40.50.410">
    <property type="entry name" value="von Willebrand factor, type A domain"/>
    <property type="match status" value="1"/>
</dbReference>
<dbReference type="HAMAP" id="MF_01626">
    <property type="entry name" value="ViaA"/>
    <property type="match status" value="1"/>
</dbReference>
<dbReference type="InterPro" id="IPR008912">
    <property type="entry name" value="Uncharacterised_CoxE"/>
</dbReference>
<dbReference type="InterPro" id="IPR023481">
    <property type="entry name" value="Uncharacterised_ViaA"/>
</dbReference>
<dbReference type="InterPro" id="IPR002035">
    <property type="entry name" value="VWF_A"/>
</dbReference>
<dbReference type="InterPro" id="IPR036465">
    <property type="entry name" value="vWFA_dom_sf"/>
</dbReference>
<dbReference type="NCBIfam" id="NF008230">
    <property type="entry name" value="PRK10997.1"/>
    <property type="match status" value="1"/>
</dbReference>
<dbReference type="PANTHER" id="PTHR36846">
    <property type="entry name" value="PROTEIN VIAA"/>
    <property type="match status" value="1"/>
</dbReference>
<dbReference type="PANTHER" id="PTHR36846:SF1">
    <property type="entry name" value="PROTEIN VIAA"/>
    <property type="match status" value="1"/>
</dbReference>
<dbReference type="Pfam" id="PF05762">
    <property type="entry name" value="VWA_CoxE"/>
    <property type="match status" value="1"/>
</dbReference>
<dbReference type="SMART" id="SM00327">
    <property type="entry name" value="VWA"/>
    <property type="match status" value="1"/>
</dbReference>
<dbReference type="SUPFAM" id="SSF53300">
    <property type="entry name" value="vWA-like"/>
    <property type="match status" value="1"/>
</dbReference>